<comment type="similarity">
    <text evidence="1">Belongs to the herpesviridae UL49 family.</text>
</comment>
<dbReference type="EMBL" id="M17209">
    <property type="protein sequence ID" value="AAA46003.1"/>
    <property type="molecule type" value="Genomic_DNA"/>
</dbReference>
<dbReference type="EMBL" id="X17403">
    <property type="protein sequence ID" value="CAA35408.1"/>
    <property type="molecule type" value="Genomic_DNA"/>
</dbReference>
<dbReference type="EMBL" id="BK000394">
    <property type="protein sequence ID" value="DAA00153.1"/>
    <property type="molecule type" value="Genomic_DNA"/>
</dbReference>
<dbReference type="PIR" id="S09812">
    <property type="entry name" value="S09812"/>
</dbReference>
<dbReference type="Proteomes" id="UP000008991">
    <property type="component" value="Segment"/>
</dbReference>
<dbReference type="Proteomes" id="UP000008992">
    <property type="component" value="Segment"/>
</dbReference>
<dbReference type="GO" id="GO:0019033">
    <property type="term" value="C:viral tegument"/>
    <property type="evidence" value="ECO:0007669"/>
    <property type="project" value="InterPro"/>
</dbReference>
<dbReference type="GO" id="GO:0016032">
    <property type="term" value="P:viral process"/>
    <property type="evidence" value="ECO:0007669"/>
    <property type="project" value="InterPro"/>
</dbReference>
<dbReference type="InterPro" id="IPR004339">
    <property type="entry name" value="UL49"/>
</dbReference>
<dbReference type="Pfam" id="PF03117">
    <property type="entry name" value="Herpes_UL49_1"/>
    <property type="match status" value="1"/>
</dbReference>
<feature type="chain" id="PRO_0000116208" description="Uncharacterized protein UL49">
    <location>
        <begin position="1"/>
        <end position="570"/>
    </location>
</feature>
<sequence length="570" mass="63851">MASRRLRHAPHTATDEFHQALRRLFAPLCVHEDHFHVQLVIGRGALQPEEAAVETSQPPAQFAAQTSAVLQQQLVHHVPRSCVLHLFVTDKRFLNRELGDRLYQRFLREWLVCRQAEREAVTALFQRMVMTKPYFVFLAYVYSMDCLHTVAVRTMAFLRFERYDTDYLLRRLRLYPPERLHALLDGVTASLLGDLHRFLFGVDLRLPVLHPTSSPCLALLRAKRFDARADLAVYHRNQWCHQRQPRSPQLRGLIAALRRYAGKVPCGNPLYVLARQAVQTFCDTCPRYLVPLRALGLHDETRGGGSTAAAAAVGHAGAGQQARHVEPTKIVLFALSAALRGGLIGSVIDLPLWCLCRLKCERHLDARSLVAVVCRQCGHCLNLGKEKLHCQQNFPLNSMFYYRDRQEKSVIFNTHAELVHCSLCGSQRVVRQRVYELVSETLFGQRCVRVGWKAVLGLNAACAVYDHRLAFDVILPCAARTCDSTVVVRDVTVPRLLRLTSHGHGLLCARCQTGEYRDSCLESEDGAPLCRGCALVKQTACHVGGHIVQQARGGLAAASSSSSPHGLPHV</sequence>
<evidence type="ECO:0000305" key="1"/>
<gene>
    <name type="primary">UL49</name>
</gene>
<protein>
    <recommendedName>
        <fullName>Uncharacterized protein UL49</fullName>
    </recommendedName>
    <alternativeName>
        <fullName>Protein HFLF5</fullName>
    </alternativeName>
</protein>
<proteinExistence type="inferred from homology"/>
<keyword id="KW-1185">Reference proteome</keyword>
<name>UL49_HCMVA</name>
<reference key="1">
    <citation type="journal article" date="1987" name="Virology">
        <title>Large-scale rearrangement of homologous regions in the genomes of HCMV and EBV.</title>
        <authorList>
            <person name="Kouzarides T."/>
            <person name="Bankier A.T."/>
            <person name="Satchwell S.C."/>
            <person name="Weston K.M."/>
            <person name="Tomlinson P."/>
            <person name="Barrell B.G."/>
        </authorList>
    </citation>
    <scope>NUCLEOTIDE SEQUENCE [GENOMIC DNA]</scope>
</reference>
<reference key="2">
    <citation type="journal article" date="1990" name="Curr. Top. Microbiol. Immunol.">
        <title>Analysis of the protein-coding content of the sequence of human cytomegalovirus strain AD169.</title>
        <authorList>
            <person name="Chee M.S."/>
            <person name="Bankier A.T."/>
            <person name="Beck S."/>
            <person name="Bohni R."/>
            <person name="Brown C.M."/>
            <person name="Cerny R."/>
            <person name="Horsnell T."/>
            <person name="Hutchison C.A. III"/>
            <person name="Kouzarides T."/>
            <person name="Martignetti J.A."/>
            <person name="Preddie E."/>
            <person name="Satchwell S.C."/>
            <person name="Tomlinson P."/>
            <person name="Weston K.M."/>
            <person name="Barrell B.G."/>
        </authorList>
    </citation>
    <scope>NUCLEOTIDE SEQUENCE [LARGE SCALE GENOMIC DNA]</scope>
</reference>
<reference key="3">
    <citation type="journal article" date="2003" name="J. Gen. Virol.">
        <title>The human cytomegalovirus genome revisited: comparison with the chimpanzee cytomegalovirus genome.</title>
        <authorList>
            <person name="Davison A.J."/>
            <person name="Dolan A."/>
            <person name="Akter P."/>
            <person name="Addison C."/>
            <person name="Dargan D.J."/>
            <person name="Alcendor D.J."/>
            <person name="McGeoch D.J."/>
            <person name="Hayward G.S."/>
        </authorList>
    </citation>
    <scope>GENOME REANNOTATION</scope>
</reference>
<reference key="4">
    <citation type="journal article" date="2003" name="J. Gen. Virol.">
        <authorList>
            <person name="Davison A.J."/>
            <person name="Dolan A."/>
            <person name="Akter P."/>
            <person name="Addison C."/>
            <person name="Dargan D.J."/>
            <person name="Alcendor D.J."/>
            <person name="McGeoch D.J."/>
            <person name="Hayward G.S."/>
        </authorList>
    </citation>
    <scope>ERRATUM OF PUBMED:12533697</scope>
</reference>
<organismHost>
    <name type="scientific">Homo sapiens</name>
    <name type="common">Human</name>
    <dbReference type="NCBI Taxonomy" id="9606"/>
</organismHost>
<accession>P16786</accession>
<accession>Q7M6N5</accession>
<organism>
    <name type="scientific">Human cytomegalovirus (strain AD169)</name>
    <name type="common">HHV-5</name>
    <name type="synonym">Human herpesvirus 5</name>
    <dbReference type="NCBI Taxonomy" id="10360"/>
    <lineage>
        <taxon>Viruses</taxon>
        <taxon>Duplodnaviria</taxon>
        <taxon>Heunggongvirae</taxon>
        <taxon>Peploviricota</taxon>
        <taxon>Herviviricetes</taxon>
        <taxon>Herpesvirales</taxon>
        <taxon>Orthoherpesviridae</taxon>
        <taxon>Betaherpesvirinae</taxon>
        <taxon>Cytomegalovirus</taxon>
        <taxon>Cytomegalovirus humanbeta5</taxon>
        <taxon>Human cytomegalovirus</taxon>
    </lineage>
</organism>